<protein>
    <recommendedName>
        <fullName evidence="1">2-C-methyl-D-erythritol 4-phosphate cytidylyltransferase</fullName>
        <ecNumber evidence="1">2.7.7.60</ecNumber>
    </recommendedName>
    <alternativeName>
        <fullName evidence="1">4-diphosphocytidyl-2C-methyl-D-erythritol synthase</fullName>
    </alternativeName>
    <alternativeName>
        <fullName evidence="1">MEP cytidylyltransferase</fullName>
        <shortName evidence="1">MCT</shortName>
    </alternativeName>
</protein>
<name>ISPD_NEOSM</name>
<comment type="function">
    <text evidence="1">Catalyzes the formation of 4-diphosphocytidyl-2-C-methyl-D-erythritol from CTP and 2-C-methyl-D-erythritol 4-phosphate (MEP).</text>
</comment>
<comment type="catalytic activity">
    <reaction evidence="1">
        <text>2-C-methyl-D-erythritol 4-phosphate + CTP + H(+) = 4-CDP-2-C-methyl-D-erythritol + diphosphate</text>
        <dbReference type="Rhea" id="RHEA:13429"/>
        <dbReference type="ChEBI" id="CHEBI:15378"/>
        <dbReference type="ChEBI" id="CHEBI:33019"/>
        <dbReference type="ChEBI" id="CHEBI:37563"/>
        <dbReference type="ChEBI" id="CHEBI:57823"/>
        <dbReference type="ChEBI" id="CHEBI:58262"/>
        <dbReference type="EC" id="2.7.7.60"/>
    </reaction>
</comment>
<comment type="pathway">
    <text evidence="1">Isoprenoid biosynthesis; isopentenyl diphosphate biosynthesis via DXP pathway; isopentenyl diphosphate from 1-deoxy-D-xylulose 5-phosphate: step 2/6.</text>
</comment>
<comment type="similarity">
    <text evidence="1">Belongs to the IspD/TarI cytidylyltransferase family. IspD subfamily.</text>
</comment>
<reference key="1">
    <citation type="journal article" date="2006" name="PLoS Genet.">
        <title>Comparative genomics of emerging human ehrlichiosis agents.</title>
        <authorList>
            <person name="Dunning Hotopp J.C."/>
            <person name="Lin M."/>
            <person name="Madupu R."/>
            <person name="Crabtree J."/>
            <person name="Angiuoli S.V."/>
            <person name="Eisen J.A."/>
            <person name="Seshadri R."/>
            <person name="Ren Q."/>
            <person name="Wu M."/>
            <person name="Utterback T.R."/>
            <person name="Smith S."/>
            <person name="Lewis M."/>
            <person name="Khouri H."/>
            <person name="Zhang C."/>
            <person name="Niu H."/>
            <person name="Lin Q."/>
            <person name="Ohashi N."/>
            <person name="Zhi N."/>
            <person name="Nelson W.C."/>
            <person name="Brinkac L.M."/>
            <person name="Dodson R.J."/>
            <person name="Rosovitz M.J."/>
            <person name="Sundaram J.P."/>
            <person name="Daugherty S.C."/>
            <person name="Davidsen T."/>
            <person name="Durkin A.S."/>
            <person name="Gwinn M.L."/>
            <person name="Haft D.H."/>
            <person name="Selengut J.D."/>
            <person name="Sullivan S.A."/>
            <person name="Zafar N."/>
            <person name="Zhou L."/>
            <person name="Benahmed F."/>
            <person name="Forberger H."/>
            <person name="Halpin R."/>
            <person name="Mulligan S."/>
            <person name="Robinson J."/>
            <person name="White O."/>
            <person name="Rikihisa Y."/>
            <person name="Tettelin H."/>
        </authorList>
    </citation>
    <scope>NUCLEOTIDE SEQUENCE [LARGE SCALE GENOMIC DNA]</scope>
    <source>
        <strain>ATCC VR-367 / Miyayama</strain>
    </source>
</reference>
<accession>Q2GEM3</accession>
<sequence length="232" mass="25310">MGKIAGLVVAGGGGSRITNSVLPKQYLQVRGKAILQYTVEALFAHPKIECVHLVVNSKCEVHYLPILRNLSGYVVSLSEAGNTRTDSVFSGLKALECLNPSHVLIQDAARPFTTPKVINAVIKSLLEGCEGVVPVVPVQDTIIKREPEGIVTDVNRDELRIVQTPQGFDFCKIFAAYKAHFMCPSKRYTDDGSLALAHGIKVECIPGDSSNLKITHPFDLKFADFLLAQSHR</sequence>
<feature type="chain" id="PRO_1000202893" description="2-C-methyl-D-erythritol 4-phosphate cytidylyltransferase">
    <location>
        <begin position="1"/>
        <end position="232"/>
    </location>
</feature>
<feature type="site" description="Transition state stabilizer" evidence="1">
    <location>
        <position position="16"/>
    </location>
</feature>
<feature type="site" description="Transition state stabilizer" evidence="1">
    <location>
        <position position="24"/>
    </location>
</feature>
<feature type="site" description="Positions MEP for the nucleophilic attack" evidence="1">
    <location>
        <position position="156"/>
    </location>
</feature>
<feature type="site" description="Positions MEP for the nucleophilic attack" evidence="1">
    <location>
        <position position="213"/>
    </location>
</feature>
<keyword id="KW-0414">Isoprene biosynthesis</keyword>
<keyword id="KW-0548">Nucleotidyltransferase</keyword>
<keyword id="KW-0808">Transferase</keyword>
<proteinExistence type="inferred from homology"/>
<gene>
    <name evidence="1" type="primary">ispD</name>
    <name type="ordered locus">NSE_0178</name>
</gene>
<dbReference type="EC" id="2.7.7.60" evidence="1"/>
<dbReference type="EMBL" id="CP000237">
    <property type="protein sequence ID" value="ABD46254.1"/>
    <property type="molecule type" value="Genomic_DNA"/>
</dbReference>
<dbReference type="RefSeq" id="WP_011451579.1">
    <property type="nucleotide sequence ID" value="NC_007798.1"/>
</dbReference>
<dbReference type="SMR" id="Q2GEM3"/>
<dbReference type="STRING" id="222891.NSE_0178"/>
<dbReference type="KEGG" id="nse:NSE_0178"/>
<dbReference type="eggNOG" id="COG1211">
    <property type="taxonomic scope" value="Bacteria"/>
</dbReference>
<dbReference type="HOGENOM" id="CLU_061281_2_2_5"/>
<dbReference type="OrthoDB" id="9804336at2"/>
<dbReference type="UniPathway" id="UPA00056">
    <property type="reaction ID" value="UER00093"/>
</dbReference>
<dbReference type="Proteomes" id="UP000001942">
    <property type="component" value="Chromosome"/>
</dbReference>
<dbReference type="GO" id="GO:0050518">
    <property type="term" value="F:2-C-methyl-D-erythritol 4-phosphate cytidylyltransferase activity"/>
    <property type="evidence" value="ECO:0007669"/>
    <property type="project" value="UniProtKB-UniRule"/>
</dbReference>
<dbReference type="GO" id="GO:0019288">
    <property type="term" value="P:isopentenyl diphosphate biosynthetic process, methylerythritol 4-phosphate pathway"/>
    <property type="evidence" value="ECO:0007669"/>
    <property type="project" value="UniProtKB-UniRule"/>
</dbReference>
<dbReference type="CDD" id="cd02516">
    <property type="entry name" value="CDP-ME_synthetase"/>
    <property type="match status" value="1"/>
</dbReference>
<dbReference type="Gene3D" id="3.90.550.10">
    <property type="entry name" value="Spore Coat Polysaccharide Biosynthesis Protein SpsA, Chain A"/>
    <property type="match status" value="1"/>
</dbReference>
<dbReference type="HAMAP" id="MF_00108">
    <property type="entry name" value="IspD"/>
    <property type="match status" value="1"/>
</dbReference>
<dbReference type="InterPro" id="IPR001228">
    <property type="entry name" value="IspD"/>
</dbReference>
<dbReference type="InterPro" id="IPR034683">
    <property type="entry name" value="IspD/TarI"/>
</dbReference>
<dbReference type="InterPro" id="IPR050088">
    <property type="entry name" value="IspD/TarI_cytidylyltransf_bact"/>
</dbReference>
<dbReference type="InterPro" id="IPR029044">
    <property type="entry name" value="Nucleotide-diphossugar_trans"/>
</dbReference>
<dbReference type="PANTHER" id="PTHR32125">
    <property type="entry name" value="2-C-METHYL-D-ERYTHRITOL 4-PHOSPHATE CYTIDYLYLTRANSFERASE, CHLOROPLASTIC"/>
    <property type="match status" value="1"/>
</dbReference>
<dbReference type="PANTHER" id="PTHR32125:SF4">
    <property type="entry name" value="2-C-METHYL-D-ERYTHRITOL 4-PHOSPHATE CYTIDYLYLTRANSFERASE, CHLOROPLASTIC"/>
    <property type="match status" value="1"/>
</dbReference>
<dbReference type="Pfam" id="PF01128">
    <property type="entry name" value="IspD"/>
    <property type="match status" value="1"/>
</dbReference>
<dbReference type="SUPFAM" id="SSF53448">
    <property type="entry name" value="Nucleotide-diphospho-sugar transferases"/>
    <property type="match status" value="1"/>
</dbReference>
<organism>
    <name type="scientific">Neorickettsia sennetsu (strain ATCC VR-367 / Miyayama)</name>
    <name type="common">Ehrlichia sennetsu</name>
    <dbReference type="NCBI Taxonomy" id="222891"/>
    <lineage>
        <taxon>Bacteria</taxon>
        <taxon>Pseudomonadati</taxon>
        <taxon>Pseudomonadota</taxon>
        <taxon>Alphaproteobacteria</taxon>
        <taxon>Rickettsiales</taxon>
        <taxon>Anaplasmataceae</taxon>
        <taxon>Neorickettsia</taxon>
    </lineage>
</organism>
<evidence type="ECO:0000255" key="1">
    <source>
        <dbReference type="HAMAP-Rule" id="MF_00108"/>
    </source>
</evidence>